<sequence length="427" mass="47899">MSVKWEKQEGNVGKLTFEIEQEKVKEGLDRAFVKVRKTLNVPGFRKGKVPRQIFNQRFGEEALYQDALDILLPEVYSQAIDEAGIDPVDTPQVNIESMEKGETWVLTADVTVKPEVKLGDYKGLEVEKRETELTTEELEAELKQLQERQAELVVKEDAPAENGDTVILDFEGFKDGVAFEGGQAENHSLELGSGQFIPGFEEKLVGLKAGDEADIELTFPEEYHAEDLAGQPVVFKVKLHEIKTKEVPALDDELAKDIDEEVETLDELKEKISKRLQEAKEDSVAQAKQEEVIAKAVENAEVDIPHAMVHHEADHLMNHFAQDLQAQGLTPELYYQFTGQTEEAMHAQMEKDAEKRVKMNLVLEAIAEAENIEPTEEAIDEEISTLAEKYGMEKDAVRAALGDMSELKSDLKIRKAIDVLLDSAVEK</sequence>
<organism>
    <name type="scientific">Listeria innocua serovar 6a (strain ATCC BAA-680 / CLIP 11262)</name>
    <dbReference type="NCBI Taxonomy" id="272626"/>
    <lineage>
        <taxon>Bacteria</taxon>
        <taxon>Bacillati</taxon>
        <taxon>Bacillota</taxon>
        <taxon>Bacilli</taxon>
        <taxon>Bacillales</taxon>
        <taxon>Listeriaceae</taxon>
        <taxon>Listeria</taxon>
    </lineage>
</organism>
<protein>
    <recommendedName>
        <fullName evidence="1">Trigger factor</fullName>
        <shortName evidence="1">TF</shortName>
        <ecNumber evidence="1">5.2.1.8</ecNumber>
    </recommendedName>
    <alternativeName>
        <fullName evidence="1">PPIase</fullName>
    </alternativeName>
</protein>
<name>TIG_LISIN</name>
<proteinExistence type="inferred from homology"/>
<comment type="function">
    <text evidence="1">Involved in protein export. Acts as a chaperone by maintaining the newly synthesized protein in an open conformation. Functions as a peptidyl-prolyl cis-trans isomerase.</text>
</comment>
<comment type="catalytic activity">
    <reaction evidence="1">
        <text>[protein]-peptidylproline (omega=180) = [protein]-peptidylproline (omega=0)</text>
        <dbReference type="Rhea" id="RHEA:16237"/>
        <dbReference type="Rhea" id="RHEA-COMP:10747"/>
        <dbReference type="Rhea" id="RHEA-COMP:10748"/>
        <dbReference type="ChEBI" id="CHEBI:83833"/>
        <dbReference type="ChEBI" id="CHEBI:83834"/>
        <dbReference type="EC" id="5.2.1.8"/>
    </reaction>
</comment>
<comment type="subcellular location">
    <subcellularLocation>
        <location>Cytoplasm</location>
    </subcellularLocation>
    <text evidence="1">About half TF is bound to the ribosome near the polypeptide exit tunnel while the other half is free in the cytoplasm.</text>
</comment>
<comment type="domain">
    <text evidence="1">Consists of 3 domains; the N-terminus binds the ribosome, the middle domain has PPIase activity, while the C-terminus has intrinsic chaperone activity on its own.</text>
</comment>
<comment type="similarity">
    <text evidence="1">Belongs to the FKBP-type PPIase family. Tig subfamily.</text>
</comment>
<evidence type="ECO:0000255" key="1">
    <source>
        <dbReference type="HAMAP-Rule" id="MF_00303"/>
    </source>
</evidence>
<reference key="1">
    <citation type="journal article" date="2001" name="Science">
        <title>Comparative genomics of Listeria species.</title>
        <authorList>
            <person name="Glaser P."/>
            <person name="Frangeul L."/>
            <person name="Buchrieser C."/>
            <person name="Rusniok C."/>
            <person name="Amend A."/>
            <person name="Baquero F."/>
            <person name="Berche P."/>
            <person name="Bloecker H."/>
            <person name="Brandt P."/>
            <person name="Chakraborty T."/>
            <person name="Charbit A."/>
            <person name="Chetouani F."/>
            <person name="Couve E."/>
            <person name="de Daruvar A."/>
            <person name="Dehoux P."/>
            <person name="Domann E."/>
            <person name="Dominguez-Bernal G."/>
            <person name="Duchaud E."/>
            <person name="Durant L."/>
            <person name="Dussurget O."/>
            <person name="Entian K.-D."/>
            <person name="Fsihi H."/>
            <person name="Garcia-del Portillo F."/>
            <person name="Garrido P."/>
            <person name="Gautier L."/>
            <person name="Goebel W."/>
            <person name="Gomez-Lopez N."/>
            <person name="Hain T."/>
            <person name="Hauf J."/>
            <person name="Jackson D."/>
            <person name="Jones L.-M."/>
            <person name="Kaerst U."/>
            <person name="Kreft J."/>
            <person name="Kuhn M."/>
            <person name="Kunst F."/>
            <person name="Kurapkat G."/>
            <person name="Madueno E."/>
            <person name="Maitournam A."/>
            <person name="Mata Vicente J."/>
            <person name="Ng E."/>
            <person name="Nedjari H."/>
            <person name="Nordsiek G."/>
            <person name="Novella S."/>
            <person name="de Pablos B."/>
            <person name="Perez-Diaz J.-C."/>
            <person name="Purcell R."/>
            <person name="Remmel B."/>
            <person name="Rose M."/>
            <person name="Schlueter T."/>
            <person name="Simoes N."/>
            <person name="Tierrez A."/>
            <person name="Vazquez-Boland J.-A."/>
            <person name="Voss H."/>
            <person name="Wehland J."/>
            <person name="Cossart P."/>
        </authorList>
    </citation>
    <scope>NUCLEOTIDE SEQUENCE [LARGE SCALE GENOMIC DNA]</scope>
    <source>
        <strain>ATCC BAA-680 / CLIP 11262</strain>
    </source>
</reference>
<feature type="chain" id="PRO_0000179375" description="Trigger factor">
    <location>
        <begin position="1"/>
        <end position="427"/>
    </location>
</feature>
<feature type="domain" description="PPIase FKBP-type" evidence="1">
    <location>
        <begin position="163"/>
        <end position="248"/>
    </location>
</feature>
<gene>
    <name evidence="1" type="primary">tig</name>
    <name type="ordered locus">lin1306</name>
</gene>
<dbReference type="EC" id="5.2.1.8" evidence="1"/>
<dbReference type="EMBL" id="AL596168">
    <property type="protein sequence ID" value="CAC96537.1"/>
    <property type="molecule type" value="Genomic_DNA"/>
</dbReference>
<dbReference type="PIR" id="AI1595">
    <property type="entry name" value="AI1595"/>
</dbReference>
<dbReference type="RefSeq" id="WP_003771581.1">
    <property type="nucleotide sequence ID" value="NC_003212.1"/>
</dbReference>
<dbReference type="SMR" id="Q92C85"/>
<dbReference type="STRING" id="272626.gene:17565637"/>
<dbReference type="GeneID" id="93234686"/>
<dbReference type="KEGG" id="lin:tig"/>
<dbReference type="eggNOG" id="COG0544">
    <property type="taxonomic scope" value="Bacteria"/>
</dbReference>
<dbReference type="HOGENOM" id="CLU_033058_3_2_9"/>
<dbReference type="OrthoDB" id="9767721at2"/>
<dbReference type="Proteomes" id="UP000002513">
    <property type="component" value="Chromosome"/>
</dbReference>
<dbReference type="GO" id="GO:0005737">
    <property type="term" value="C:cytoplasm"/>
    <property type="evidence" value="ECO:0007669"/>
    <property type="project" value="UniProtKB-SubCell"/>
</dbReference>
<dbReference type="GO" id="GO:0003755">
    <property type="term" value="F:peptidyl-prolyl cis-trans isomerase activity"/>
    <property type="evidence" value="ECO:0007669"/>
    <property type="project" value="UniProtKB-UniRule"/>
</dbReference>
<dbReference type="GO" id="GO:0044183">
    <property type="term" value="F:protein folding chaperone"/>
    <property type="evidence" value="ECO:0007669"/>
    <property type="project" value="TreeGrafter"/>
</dbReference>
<dbReference type="GO" id="GO:0043022">
    <property type="term" value="F:ribosome binding"/>
    <property type="evidence" value="ECO:0007669"/>
    <property type="project" value="TreeGrafter"/>
</dbReference>
<dbReference type="GO" id="GO:0051083">
    <property type="term" value="P:'de novo' cotranslational protein folding"/>
    <property type="evidence" value="ECO:0007669"/>
    <property type="project" value="TreeGrafter"/>
</dbReference>
<dbReference type="GO" id="GO:0051301">
    <property type="term" value="P:cell division"/>
    <property type="evidence" value="ECO:0007669"/>
    <property type="project" value="UniProtKB-KW"/>
</dbReference>
<dbReference type="GO" id="GO:0061077">
    <property type="term" value="P:chaperone-mediated protein folding"/>
    <property type="evidence" value="ECO:0007669"/>
    <property type="project" value="TreeGrafter"/>
</dbReference>
<dbReference type="GO" id="GO:0015031">
    <property type="term" value="P:protein transport"/>
    <property type="evidence" value="ECO:0007669"/>
    <property type="project" value="UniProtKB-UniRule"/>
</dbReference>
<dbReference type="GO" id="GO:0043335">
    <property type="term" value="P:protein unfolding"/>
    <property type="evidence" value="ECO:0007669"/>
    <property type="project" value="TreeGrafter"/>
</dbReference>
<dbReference type="FunFam" id="3.10.50.40:FF:000001">
    <property type="entry name" value="Trigger factor"/>
    <property type="match status" value="1"/>
</dbReference>
<dbReference type="FunFam" id="3.30.70.1050:FF:000002">
    <property type="entry name" value="Trigger factor"/>
    <property type="match status" value="1"/>
</dbReference>
<dbReference type="Gene3D" id="3.10.50.40">
    <property type="match status" value="1"/>
</dbReference>
<dbReference type="Gene3D" id="3.30.70.1050">
    <property type="entry name" value="Trigger factor ribosome-binding domain"/>
    <property type="match status" value="1"/>
</dbReference>
<dbReference type="Gene3D" id="1.10.3120.10">
    <property type="entry name" value="Trigger factor, C-terminal domain"/>
    <property type="match status" value="1"/>
</dbReference>
<dbReference type="HAMAP" id="MF_00303">
    <property type="entry name" value="Trigger_factor_Tig"/>
    <property type="match status" value="1"/>
</dbReference>
<dbReference type="InterPro" id="IPR046357">
    <property type="entry name" value="PPIase_dom_sf"/>
</dbReference>
<dbReference type="InterPro" id="IPR001179">
    <property type="entry name" value="PPIase_FKBP_dom"/>
</dbReference>
<dbReference type="InterPro" id="IPR005215">
    <property type="entry name" value="Trig_fac"/>
</dbReference>
<dbReference type="InterPro" id="IPR008880">
    <property type="entry name" value="Trigger_fac_C"/>
</dbReference>
<dbReference type="InterPro" id="IPR037041">
    <property type="entry name" value="Trigger_fac_C_sf"/>
</dbReference>
<dbReference type="InterPro" id="IPR008881">
    <property type="entry name" value="Trigger_fac_ribosome-bd_bac"/>
</dbReference>
<dbReference type="InterPro" id="IPR036611">
    <property type="entry name" value="Trigger_fac_ribosome-bd_sf"/>
</dbReference>
<dbReference type="InterPro" id="IPR027304">
    <property type="entry name" value="Trigger_fact/SurA_dom_sf"/>
</dbReference>
<dbReference type="NCBIfam" id="TIGR00115">
    <property type="entry name" value="tig"/>
    <property type="match status" value="1"/>
</dbReference>
<dbReference type="PANTHER" id="PTHR30560">
    <property type="entry name" value="TRIGGER FACTOR CHAPERONE AND PEPTIDYL-PROLYL CIS/TRANS ISOMERASE"/>
    <property type="match status" value="1"/>
</dbReference>
<dbReference type="PANTHER" id="PTHR30560:SF3">
    <property type="entry name" value="TRIGGER FACTOR-LIKE PROTEIN TIG, CHLOROPLASTIC"/>
    <property type="match status" value="1"/>
</dbReference>
<dbReference type="Pfam" id="PF00254">
    <property type="entry name" value="FKBP_C"/>
    <property type="match status" value="1"/>
</dbReference>
<dbReference type="Pfam" id="PF05698">
    <property type="entry name" value="Trigger_C"/>
    <property type="match status" value="1"/>
</dbReference>
<dbReference type="Pfam" id="PF05697">
    <property type="entry name" value="Trigger_N"/>
    <property type="match status" value="1"/>
</dbReference>
<dbReference type="PIRSF" id="PIRSF003095">
    <property type="entry name" value="Trigger_factor"/>
    <property type="match status" value="1"/>
</dbReference>
<dbReference type="SUPFAM" id="SSF54534">
    <property type="entry name" value="FKBP-like"/>
    <property type="match status" value="1"/>
</dbReference>
<dbReference type="SUPFAM" id="SSF109998">
    <property type="entry name" value="Triger factor/SurA peptide-binding domain-like"/>
    <property type="match status" value="1"/>
</dbReference>
<dbReference type="SUPFAM" id="SSF102735">
    <property type="entry name" value="Trigger factor ribosome-binding domain"/>
    <property type="match status" value="1"/>
</dbReference>
<dbReference type="PROSITE" id="PS50059">
    <property type="entry name" value="FKBP_PPIASE"/>
    <property type="match status" value="1"/>
</dbReference>
<accession>Q92C85</accession>
<keyword id="KW-0131">Cell cycle</keyword>
<keyword id="KW-0132">Cell division</keyword>
<keyword id="KW-0143">Chaperone</keyword>
<keyword id="KW-0963">Cytoplasm</keyword>
<keyword id="KW-0413">Isomerase</keyword>
<keyword id="KW-0697">Rotamase</keyword>